<reference key="1">
    <citation type="journal article" date="2008" name="Genetics">
        <title>Comparative analysis of testis protein evolution in rodents.</title>
        <authorList>
            <person name="Turner L.M."/>
            <person name="Chuong E.B."/>
            <person name="Hoekstra H.E."/>
        </authorList>
    </citation>
    <scope>NUCLEOTIDE SEQUENCE [MRNA]</scope>
    <source>
        <strain>PGSC14</strain>
    </source>
</reference>
<dbReference type="EMBL" id="EU836297">
    <property type="protein sequence ID" value="ACI22866.1"/>
    <property type="molecule type" value="mRNA"/>
</dbReference>
<dbReference type="SMR" id="B6D5P1"/>
<dbReference type="GO" id="GO:0005930">
    <property type="term" value="C:axoneme"/>
    <property type="evidence" value="ECO:0000250"/>
    <property type="project" value="UniProtKB"/>
</dbReference>
<dbReference type="GO" id="GO:0070840">
    <property type="term" value="F:dynein complex binding"/>
    <property type="evidence" value="ECO:0000250"/>
    <property type="project" value="UniProtKB"/>
</dbReference>
<dbReference type="GO" id="GO:0035082">
    <property type="term" value="P:axoneme assembly"/>
    <property type="evidence" value="ECO:0007669"/>
    <property type="project" value="TreeGrafter"/>
</dbReference>
<dbReference type="GO" id="GO:0060271">
    <property type="term" value="P:cilium assembly"/>
    <property type="evidence" value="ECO:0000250"/>
    <property type="project" value="UniProtKB"/>
</dbReference>
<dbReference type="FunFam" id="3.80.10.10:FF:000349">
    <property type="entry name" value="Dynein assembly factor 1, axonemal"/>
    <property type="match status" value="1"/>
</dbReference>
<dbReference type="FunFam" id="3.80.10.10:FF:000394">
    <property type="entry name" value="Dynein assembly factor 1, axonemal"/>
    <property type="match status" value="1"/>
</dbReference>
<dbReference type="Gene3D" id="3.80.10.10">
    <property type="entry name" value="Ribonuclease Inhibitor"/>
    <property type="match status" value="2"/>
</dbReference>
<dbReference type="InterPro" id="IPR050576">
    <property type="entry name" value="Cilia_flagella_integrity"/>
</dbReference>
<dbReference type="InterPro" id="IPR001611">
    <property type="entry name" value="Leu-rich_rpt"/>
</dbReference>
<dbReference type="InterPro" id="IPR032675">
    <property type="entry name" value="LRR_dom_sf"/>
</dbReference>
<dbReference type="PANTHER" id="PTHR45973:SF19">
    <property type="entry name" value="DYNEIN AXONEMAL ASSEMBLY FACTOR 1"/>
    <property type="match status" value="1"/>
</dbReference>
<dbReference type="PANTHER" id="PTHR45973">
    <property type="entry name" value="PROTEIN PHOSPHATASE 1 REGULATORY SUBUNIT SDS22-RELATED"/>
    <property type="match status" value="1"/>
</dbReference>
<dbReference type="Pfam" id="PF14580">
    <property type="entry name" value="LRR_9"/>
    <property type="match status" value="1"/>
</dbReference>
<dbReference type="SMART" id="SM00365">
    <property type="entry name" value="LRR_SD22"/>
    <property type="match status" value="3"/>
</dbReference>
<dbReference type="SUPFAM" id="SSF52075">
    <property type="entry name" value="Outer arm dynein light chain 1"/>
    <property type="match status" value="1"/>
</dbReference>
<dbReference type="PROSITE" id="PS51450">
    <property type="entry name" value="LRR"/>
    <property type="match status" value="6"/>
</dbReference>
<accession>B6D5P1</accession>
<name>DAAF1_PERPL</name>
<comment type="function">
    <text evidence="1">Cilium-specific protein required for the stability of the ciliary architecture. Plays a role in cytoplasmic preassembly of dynein arms (By similarity). Involved in regulation of microtubule-based cilia and actin-based brush border microvilli (By similarity).</text>
</comment>
<comment type="subcellular location">
    <subcellularLocation>
        <location evidence="1">Cell projection</location>
        <location evidence="1">Cilium</location>
    </subcellularLocation>
</comment>
<comment type="similarity">
    <text evidence="5">Belongs to the DNAAF1 family.</text>
</comment>
<feature type="chain" id="PRO_0000363932" description="Dynein axonemal assembly factor 1">
    <location>
        <begin position="1"/>
        <end position="622"/>
    </location>
</feature>
<feature type="repeat" description="LRR 1">
    <location>
        <begin position="101"/>
        <end position="123"/>
    </location>
</feature>
<feature type="repeat" description="LRR 2">
    <location>
        <begin position="124"/>
        <end position="145"/>
    </location>
</feature>
<feature type="repeat" description="LRR 3">
    <location>
        <begin position="146"/>
        <end position="167"/>
    </location>
</feature>
<feature type="repeat" description="LRR 4">
    <location>
        <begin position="168"/>
        <end position="189"/>
    </location>
</feature>
<feature type="repeat" description="LRR 5">
    <location>
        <begin position="190"/>
        <end position="211"/>
    </location>
</feature>
<feature type="repeat" description="LRR 6">
    <location>
        <begin position="215"/>
        <end position="236"/>
    </location>
</feature>
<feature type="domain" description="LRRCT">
    <location>
        <begin position="249"/>
        <end position="288"/>
    </location>
</feature>
<feature type="region of interest" description="Disordered" evidence="4">
    <location>
        <begin position="1"/>
        <end position="80"/>
    </location>
</feature>
<feature type="region of interest" description="Disordered" evidence="4">
    <location>
        <begin position="326"/>
        <end position="360"/>
    </location>
</feature>
<feature type="region of interest" description="Disordered" evidence="4">
    <location>
        <begin position="399"/>
        <end position="431"/>
    </location>
</feature>
<feature type="region of interest" description="Disordered" evidence="4">
    <location>
        <begin position="480"/>
        <end position="503"/>
    </location>
</feature>
<feature type="region of interest" description="Disordered" evidence="4">
    <location>
        <begin position="525"/>
        <end position="622"/>
    </location>
</feature>
<feature type="compositionally biased region" description="Polar residues" evidence="4">
    <location>
        <begin position="1"/>
        <end position="11"/>
    </location>
</feature>
<feature type="compositionally biased region" description="Basic and acidic residues" evidence="4">
    <location>
        <begin position="32"/>
        <end position="42"/>
    </location>
</feature>
<feature type="compositionally biased region" description="Low complexity" evidence="4">
    <location>
        <begin position="48"/>
        <end position="59"/>
    </location>
</feature>
<feature type="compositionally biased region" description="Basic and acidic residues" evidence="4">
    <location>
        <begin position="62"/>
        <end position="80"/>
    </location>
</feature>
<feature type="compositionally biased region" description="Basic and acidic residues" evidence="4">
    <location>
        <begin position="326"/>
        <end position="336"/>
    </location>
</feature>
<feature type="compositionally biased region" description="Low complexity" evidence="4">
    <location>
        <begin position="337"/>
        <end position="351"/>
    </location>
</feature>
<feature type="compositionally biased region" description="Low complexity" evidence="4">
    <location>
        <begin position="415"/>
        <end position="428"/>
    </location>
</feature>
<feature type="compositionally biased region" description="Polar residues" evidence="4">
    <location>
        <begin position="539"/>
        <end position="550"/>
    </location>
</feature>
<feature type="modified residue" description="Phosphoserine" evidence="2">
    <location>
        <position position="349"/>
    </location>
</feature>
<feature type="modified residue" description="Phosphoserine" evidence="3">
    <location>
        <position position="464"/>
    </location>
</feature>
<feature type="modified residue" description="Phosphoserine" evidence="3">
    <location>
        <position position="487"/>
    </location>
</feature>
<keyword id="KW-0966">Cell projection</keyword>
<keyword id="KW-0969">Cilium</keyword>
<keyword id="KW-0433">Leucine-rich repeat</keyword>
<keyword id="KW-0597">Phosphoprotein</keyword>
<keyword id="KW-0677">Repeat</keyword>
<evidence type="ECO:0000250" key="1"/>
<evidence type="ECO:0000250" key="2">
    <source>
        <dbReference type="UniProtKB" id="Q6AYH9"/>
    </source>
</evidence>
<evidence type="ECO:0000250" key="3">
    <source>
        <dbReference type="UniProtKB" id="Q9D2H9"/>
    </source>
</evidence>
<evidence type="ECO:0000256" key="4">
    <source>
        <dbReference type="SAM" id="MobiDB-lite"/>
    </source>
</evidence>
<evidence type="ECO:0000305" key="5"/>
<organism>
    <name type="scientific">Peromyscus polionotus</name>
    <name type="common">Oldfield mouse</name>
    <dbReference type="NCBI Taxonomy" id="42413"/>
    <lineage>
        <taxon>Eukaryota</taxon>
        <taxon>Metazoa</taxon>
        <taxon>Chordata</taxon>
        <taxon>Craniata</taxon>
        <taxon>Vertebrata</taxon>
        <taxon>Euteleostomi</taxon>
        <taxon>Mammalia</taxon>
        <taxon>Eutheria</taxon>
        <taxon>Euarchontoglires</taxon>
        <taxon>Glires</taxon>
        <taxon>Rodentia</taxon>
        <taxon>Myomorpha</taxon>
        <taxon>Muroidea</taxon>
        <taxon>Cricetidae</taxon>
        <taxon>Neotominae</taxon>
        <taxon>Peromyscus</taxon>
    </lineage>
</organism>
<protein>
    <recommendedName>
        <fullName>Dynein axonemal assembly factor 1</fullName>
    </recommendedName>
    <alternativeName>
        <fullName>Leucine-rich repeat-containing protein 50</fullName>
    </alternativeName>
</protein>
<gene>
    <name type="primary">Dnaaf1</name>
    <name type="synonym">Lrrc50</name>
</gene>
<sequence>MHPEVSEQQADGATEPSLEESAGDHSGAGPGVRKEEINETKETCVGPSTTSCQSQKQQSGDSRLDCRSGYARNDRDDRGPRMTKEFLQKLCKQHKLYITPALNDTLYLHFKGFDRIENLEEYTGLRCLWLECNGIQRIENLQAQSELRCLFLQVNLLHKIENLEPLQKLDALNLSNNYIKTIENLSCLPVLNTLQMAHNRLETVADIQHLRECLRLCVLDLSHNMLSDPEILSVLESMPCLRVLNLMGNPVTKHIPNYRRTVTVRLKQLTYLDDRPVFPKDRACAEAWARGGYAAEKEERLQWESREHKKITDSLEALAMIKRRAEERKKARDKGETPLPDSEESSSTSPEAQDKPPLGETQQKIEVLVEESFKAKDELFPEKPGGEEELAVVADRTMEEPDLPGSLAQSQTPLVATAEESTSSVAATDGTGIEDTEAIALENKERLFIDDLPDLEDVDGMDISMEDQTKETGIPKIQVISSLSDDSDPELNDSPLPMLEHTPTGSTGVLSNIFAVCKDSSKAARVPLTDIYEPRATTAPETQGQVFSTTPPRPLIQELEEDGRGENESKQSLPAQSSEDGDSQLPEATLLGDRAENEAQSSLDLGKPSPRASLEDIEFGLD</sequence>
<proteinExistence type="evidence at transcript level"/>